<keyword id="KW-0521">NADP</keyword>
<keyword id="KW-0547">Nucleotide-binding</keyword>
<keyword id="KW-0560">Oxidoreductase</keyword>
<evidence type="ECO:0000250" key="1">
    <source>
        <dbReference type="UniProtKB" id="Q9Y7D0"/>
    </source>
</evidence>
<evidence type="ECO:0000269" key="2">
    <source>
    </source>
</evidence>
<evidence type="ECO:0000303" key="3">
    <source>
    </source>
</evidence>
<evidence type="ECO:0000305" key="4"/>
<evidence type="ECO:0000305" key="5">
    <source>
    </source>
</evidence>
<name>STHE_PHANO</name>
<protein>
    <recommendedName>
        <fullName evidence="3">Trans-enoyl reductase sthE</fullName>
        <ecNumber evidence="5">1.-.-.-</ecNumber>
    </recommendedName>
    <alternativeName>
        <fullName evidence="3">Stemphyloxin II biosynthesis cluster protein E</fullName>
    </alternativeName>
</protein>
<sequence>MLPANGQTAVIQSKTSSHGLPLVVAHGRPLPPLPTPYHVRVRVLAVGLNPTDYKMVTHFFMQDNTAGCDFCGIVEEAGPQSVLGLGLRVCGADFPYRPSNPYNGAFAEYATADSRHLLRIPDGVSDLQAAGIGAIGWGTAALAISDPAALDLPGLPSRPDSRGLPVLVYGGATATGIMAIQMLKLSGYSPIAVCSESSAPLCMSLGAIGTASYTSVTCAEDIKAIAKGSKIKHALDCITDVESMAICLASLSRTGGRYACLEAFPDAWLTRRAIAVKVVMGFEGQNVDVDLGHPVYTRKANPALHAVAGEWARELQLLLNDGQIKTQPMQEIGGSFEGVIKALEMLQRGDVKGKKLAIRIAYSK</sequence>
<proteinExistence type="evidence at protein level"/>
<feature type="chain" id="PRO_0000448653" description="Trans-enoyl reductase sthE">
    <location>
        <begin position="1"/>
        <end position="364"/>
    </location>
</feature>
<feature type="binding site" evidence="1">
    <location>
        <begin position="51"/>
        <end position="54"/>
    </location>
    <ligand>
        <name>NADP(+)</name>
        <dbReference type="ChEBI" id="CHEBI:58349"/>
    </ligand>
</feature>
<feature type="binding site" evidence="1">
    <location>
        <begin position="137"/>
        <end position="144"/>
    </location>
    <ligand>
        <name>substrate</name>
    </ligand>
</feature>
<feature type="binding site" evidence="1">
    <location>
        <begin position="172"/>
        <end position="175"/>
    </location>
    <ligand>
        <name>NADP(+)</name>
        <dbReference type="ChEBI" id="CHEBI:58349"/>
    </ligand>
</feature>
<feature type="binding site" evidence="1">
    <location>
        <begin position="195"/>
        <end position="198"/>
    </location>
    <ligand>
        <name>NADP(+)</name>
        <dbReference type="ChEBI" id="CHEBI:58349"/>
    </ligand>
</feature>
<feature type="binding site" evidence="1">
    <location>
        <position position="213"/>
    </location>
    <ligand>
        <name>NADP(+)</name>
        <dbReference type="ChEBI" id="CHEBI:58349"/>
    </ligand>
</feature>
<feature type="binding site" evidence="1">
    <location>
        <begin position="261"/>
        <end position="262"/>
    </location>
    <ligand>
        <name>NADP(+)</name>
        <dbReference type="ChEBI" id="CHEBI:58349"/>
    </ligand>
</feature>
<feature type="binding site" evidence="1">
    <location>
        <begin position="281"/>
        <end position="285"/>
    </location>
    <ligand>
        <name>substrate</name>
    </ligand>
</feature>
<feature type="binding site" evidence="1">
    <location>
        <begin position="351"/>
        <end position="352"/>
    </location>
    <ligand>
        <name>NADP(+)</name>
        <dbReference type="ChEBI" id="CHEBI:58349"/>
    </ligand>
</feature>
<gene>
    <name evidence="3" type="primary">sthE</name>
    <name type="ORF">SNOG_07864</name>
</gene>
<organism>
    <name type="scientific">Phaeosphaeria nodorum (strain SN15 / ATCC MYA-4574 / FGSC 10173)</name>
    <name type="common">Glume blotch fungus</name>
    <name type="synonym">Parastagonospora nodorum</name>
    <dbReference type="NCBI Taxonomy" id="321614"/>
    <lineage>
        <taxon>Eukaryota</taxon>
        <taxon>Fungi</taxon>
        <taxon>Dikarya</taxon>
        <taxon>Ascomycota</taxon>
        <taxon>Pezizomycotina</taxon>
        <taxon>Dothideomycetes</taxon>
        <taxon>Pleosporomycetidae</taxon>
        <taxon>Pleosporales</taxon>
        <taxon>Pleosporineae</taxon>
        <taxon>Phaeosphaeriaceae</taxon>
        <taxon>Parastagonospora</taxon>
    </lineage>
</organism>
<comment type="function">
    <text evidence="2">Trans-enoyl reductase; part of the gene cluster that mediates the biosynthesis of the phytotoxin stemphyloxin II (PubMed:31553484). The first step of the pathway is the synthesis of dehydroprobetaenone I by the polyketide synthase sthA and the enoyl reductase sthE via condensation of one acetyl-CoA starter unit with 7 malonyl-CoA units and 5 methylations (PubMed:31553484). The C-terminal reductase (R) domain of sthA catalyzes the reductive release of the polyketide chain (PubMed:31553484). Because sthA lacks a designated enoylreductase (ER) domain, the required activity is provided the enoyl reductase sthE (PubMed:31553484). The short-chain dehydrogenase/reductase sthC then catalyzes reduction of dehydroprobetaenone I to probetaenone I (PubMed:31553484). The cytochrome P450 monooxygenase sthF catalyzes successive epoxidation, oxidation (resulting from epoxide opening) and hydroxylation to install a tertiary alcohol in the decaline ring to yield betaenone C from dehydroprobetaenone I and betaenone B from probetaenone I (PubMed:31553484). The FAD-linked oxidoreductase sthB is responsible for the conversion of betaenone C to betaenone A via an intramolecular aldol reaction between C-1 and C-17 to form the bridged tricyclic system in betaenone A (PubMed:31553484). Finally, the cytochrome P450 monooxygenase sthD catalyzes the hydroxylation of C-15 to afford the final metabolite stemphyloxin II (PubMed:31553484).</text>
</comment>
<comment type="catalytic activity">
    <reaction evidence="2">
        <text>7 malonyl-CoA + acetyl-CoA + 10 AH2 + 5 S-adenosyl-L-methionine + 2 H(+) = dehydroprobetaenone I + 10 A + 5 S-adenosyl-L-homocysteine + 7 CO2 + 8 CoA + 6 H2O</text>
        <dbReference type="Rhea" id="RHEA:51348"/>
        <dbReference type="ChEBI" id="CHEBI:13193"/>
        <dbReference type="ChEBI" id="CHEBI:15377"/>
        <dbReference type="ChEBI" id="CHEBI:15378"/>
        <dbReference type="ChEBI" id="CHEBI:16526"/>
        <dbReference type="ChEBI" id="CHEBI:17499"/>
        <dbReference type="ChEBI" id="CHEBI:57287"/>
        <dbReference type="ChEBI" id="CHEBI:57288"/>
        <dbReference type="ChEBI" id="CHEBI:57384"/>
        <dbReference type="ChEBI" id="CHEBI:57856"/>
        <dbReference type="ChEBI" id="CHEBI:59789"/>
        <dbReference type="ChEBI" id="CHEBI:145061"/>
    </reaction>
    <physiologicalReaction direction="left-to-right" evidence="2">
        <dbReference type="Rhea" id="RHEA:51349"/>
    </physiologicalReaction>
</comment>
<comment type="pathway">
    <text evidence="2">Mycotoxin biosynthesis.</text>
</comment>
<comment type="subunit">
    <text evidence="1">Monomer.</text>
</comment>
<comment type="similarity">
    <text evidence="4">Belongs to the zinc-containing alcohol dehydrogenase family.</text>
</comment>
<dbReference type="EC" id="1.-.-.-" evidence="5"/>
<dbReference type="EMBL" id="CH445335">
    <property type="protein sequence ID" value="EAT85330.1"/>
    <property type="molecule type" value="Genomic_DNA"/>
</dbReference>
<dbReference type="RefSeq" id="XP_001798191.1">
    <property type="nucleotide sequence ID" value="XM_001798139.1"/>
</dbReference>
<dbReference type="SMR" id="Q0UK50"/>
<dbReference type="EnsemblFungi" id="SNOT_07864">
    <property type="protein sequence ID" value="SNOT_07864"/>
    <property type="gene ID" value="SNOG_07864"/>
</dbReference>
<dbReference type="GeneID" id="5975084"/>
<dbReference type="KEGG" id="pno:SNOG_07864"/>
<dbReference type="VEuPathDB" id="FungiDB:JI435_078640"/>
<dbReference type="eggNOG" id="KOG1198">
    <property type="taxonomic scope" value="Eukaryota"/>
</dbReference>
<dbReference type="HOGENOM" id="CLU_026673_16_1_1"/>
<dbReference type="InParanoid" id="Q0UK50"/>
<dbReference type="OMA" id="DHKMVTH"/>
<dbReference type="OrthoDB" id="48317at2759"/>
<dbReference type="Proteomes" id="UP000001055">
    <property type="component" value="Unassembled WGS sequence"/>
</dbReference>
<dbReference type="GO" id="GO:0000166">
    <property type="term" value="F:nucleotide binding"/>
    <property type="evidence" value="ECO:0007669"/>
    <property type="project" value="UniProtKB-KW"/>
</dbReference>
<dbReference type="GO" id="GO:0016651">
    <property type="term" value="F:oxidoreductase activity, acting on NAD(P)H"/>
    <property type="evidence" value="ECO:0007669"/>
    <property type="project" value="InterPro"/>
</dbReference>
<dbReference type="CDD" id="cd08249">
    <property type="entry name" value="enoyl_reductase_like"/>
    <property type="match status" value="1"/>
</dbReference>
<dbReference type="Gene3D" id="3.90.180.10">
    <property type="entry name" value="Medium-chain alcohol dehydrogenases, catalytic domain"/>
    <property type="match status" value="1"/>
</dbReference>
<dbReference type="Gene3D" id="3.40.50.720">
    <property type="entry name" value="NAD(P)-binding Rossmann-like Domain"/>
    <property type="match status" value="1"/>
</dbReference>
<dbReference type="InterPro" id="IPR013149">
    <property type="entry name" value="ADH-like_C"/>
</dbReference>
<dbReference type="InterPro" id="IPR013154">
    <property type="entry name" value="ADH-like_N"/>
</dbReference>
<dbReference type="InterPro" id="IPR011032">
    <property type="entry name" value="GroES-like_sf"/>
</dbReference>
<dbReference type="InterPro" id="IPR036291">
    <property type="entry name" value="NAD(P)-bd_dom_sf"/>
</dbReference>
<dbReference type="InterPro" id="IPR020843">
    <property type="entry name" value="PKS_ER"/>
</dbReference>
<dbReference type="InterPro" id="IPR047122">
    <property type="entry name" value="Trans-enoyl_RdTase-like"/>
</dbReference>
<dbReference type="PANTHER" id="PTHR45348">
    <property type="entry name" value="HYPOTHETICAL OXIDOREDUCTASE (EUROFUNG)"/>
    <property type="match status" value="1"/>
</dbReference>
<dbReference type="PANTHER" id="PTHR45348:SF1">
    <property type="entry name" value="TRANS-ENOYL REDUCTASE STHE"/>
    <property type="match status" value="1"/>
</dbReference>
<dbReference type="Pfam" id="PF08240">
    <property type="entry name" value="ADH_N"/>
    <property type="match status" value="1"/>
</dbReference>
<dbReference type="Pfam" id="PF00107">
    <property type="entry name" value="ADH_zinc_N"/>
    <property type="match status" value="1"/>
</dbReference>
<dbReference type="SMART" id="SM00829">
    <property type="entry name" value="PKS_ER"/>
    <property type="match status" value="1"/>
</dbReference>
<dbReference type="SUPFAM" id="SSF50129">
    <property type="entry name" value="GroES-like"/>
    <property type="match status" value="1"/>
</dbReference>
<dbReference type="SUPFAM" id="SSF51735">
    <property type="entry name" value="NAD(P)-binding Rossmann-fold domains"/>
    <property type="match status" value="1"/>
</dbReference>
<accession>Q0UK50</accession>
<reference key="1">
    <citation type="journal article" date="2007" name="Plant Cell">
        <title>Dothideomycete-plant interactions illuminated by genome sequencing and EST analysis of the wheat pathogen Stagonospora nodorum.</title>
        <authorList>
            <person name="Hane J.K."/>
            <person name="Lowe R.G.T."/>
            <person name="Solomon P.S."/>
            <person name="Tan K.-C."/>
            <person name="Schoch C.L."/>
            <person name="Spatafora J.W."/>
            <person name="Crous P.W."/>
            <person name="Kodira C.D."/>
            <person name="Birren B.W."/>
            <person name="Galagan J.E."/>
            <person name="Torriani S.F.F."/>
            <person name="McDonald B.A."/>
            <person name="Oliver R.P."/>
        </authorList>
    </citation>
    <scope>NUCLEOTIDE SEQUENCE [LARGE SCALE GENOMIC DNA]</scope>
    <source>
        <strain>SN15 / ATCC MYA-4574 / FGSC 10173</strain>
    </source>
</reference>
<reference key="2">
    <citation type="journal article" date="2019" name="Chemistry">
        <title>Biosynthesis of a Tricyclo[6.2.2.02,7]dodecane System by a Berberine Bridge Enzyme-like Intramolecular Aldolase.</title>
        <authorList>
            <person name="Li H."/>
            <person name="Hu J."/>
            <person name="Wei H."/>
            <person name="Solomon P.S."/>
            <person name="Stubbs K.A."/>
            <person name="Chooi Y.H."/>
        </authorList>
    </citation>
    <scope>FUNCTION</scope>
    <scope>CATALYTIC ACTIVITY</scope>
    <scope>PATHWAY</scope>
</reference>